<accession>P50387</accession>
<accession>A0A8F5BRP5</accession>
<comment type="function">
    <text evidence="1">Stabilizes TBP binding to an archaeal box-A promoter. Also responsible for recruiting RNA polymerase II to the pre-initiation complex (DNA-TBP-TFIIB).</text>
</comment>
<comment type="similarity">
    <text evidence="1">Belongs to the TFIIB family.</text>
</comment>
<comment type="sequence caution" evidence="2">
    <conflict type="erroneous initiation">
        <sequence resource="EMBL-CDS" id="AAA81380"/>
    </conflict>
    <text>Extended N-terminus.</text>
</comment>
<organism>
    <name type="scientific">Saccharolobus shibatae (strain ATCC 51178 / DSM 5389 / JCM 8931 / NBRC 15437 / B12)</name>
    <name type="common">Sulfolobus shibatae</name>
    <dbReference type="NCBI Taxonomy" id="523848"/>
    <lineage>
        <taxon>Archaea</taxon>
        <taxon>Thermoproteota</taxon>
        <taxon>Thermoprotei</taxon>
        <taxon>Sulfolobales</taxon>
        <taxon>Sulfolobaceae</taxon>
        <taxon>Saccharolobus</taxon>
    </lineage>
</organism>
<reference key="1">
    <citation type="journal article" date="1995" name="Proc. Natl. Acad. Sci. U.S.A.">
        <title>Molecular cloning of the transcription factor TFIIB homolog from Sulfolobus shibatae.</title>
        <authorList>
            <person name="Qureshi S.A."/>
            <person name="Khoo B."/>
            <person name="Baumann P."/>
            <person name="Jackson S.P."/>
        </authorList>
    </citation>
    <scope>NUCLEOTIDE SEQUENCE [GENOMIC DNA]</scope>
</reference>
<reference evidence="3" key="2">
    <citation type="journal article" date="2021" name="Environ. Microbiol.">
        <title>New insights into the diversity and evolution of the archaeal mobilome from three complete genomes of Saccharolobus shibatae.</title>
        <authorList>
            <person name="Medvedeva S."/>
            <person name="Brandt D."/>
            <person name="Cvirkaite-Krupovic V."/>
            <person name="Liu Y."/>
            <person name="Severinov K."/>
            <person name="Ishino S."/>
            <person name="Ishino Y."/>
            <person name="Prangishvili D."/>
            <person name="Kalinowski J."/>
            <person name="Krupovic M."/>
        </authorList>
    </citation>
    <scope>NUCLEOTIDE SEQUENCE [LARGE SCALE GENOMIC DNA]</scope>
    <source>
        <strain>ATCC 51178 / DSM 5389 / JCM 8931 / NBRC 15437 / B12</strain>
    </source>
</reference>
<name>TF2B_SACSH</name>
<gene>
    <name evidence="1" type="primary">tfb</name>
    <name evidence="3" type="ORF">J5U23_02991</name>
</gene>
<keyword id="KW-0677">Repeat</keyword>
<keyword id="KW-0804">Transcription</keyword>
<keyword id="KW-0805">Transcription regulation</keyword>
<protein>
    <recommendedName>
        <fullName evidence="1">Transcription initiation factor IIB</fullName>
        <shortName evidence="1">TFIIB</shortName>
    </recommendedName>
</protein>
<feature type="chain" id="PRO_0000119334" description="Transcription initiation factor IIB">
    <location>
        <begin position="1"/>
        <end position="306"/>
    </location>
</feature>
<feature type="repeat" description="1" evidence="1">
    <location>
        <begin position="122"/>
        <end position="205"/>
    </location>
</feature>
<feature type="repeat" description="2" evidence="1">
    <location>
        <begin position="216"/>
        <end position="297"/>
    </location>
</feature>
<feature type="sequence conflict" description="In Ref. 1; AAA81380." evidence="2" ref="1">
    <original>A</original>
    <variation>R</variation>
    <location>
        <position position="230"/>
    </location>
</feature>
<evidence type="ECO:0000255" key="1">
    <source>
        <dbReference type="HAMAP-Rule" id="MF_00383"/>
    </source>
</evidence>
<evidence type="ECO:0000305" key="2"/>
<evidence type="ECO:0000312" key="3">
    <source>
        <dbReference type="EMBL" id="QXJ30100.1"/>
    </source>
</evidence>
<sequence>MSEENKSVSTPCPPDKIIFDAERGEYICSETGEVLEDKIIDQGPEWRAFTPEEKEKRSRVGGPLNNTIHDRGLSTLIDWKDKDAMGRTLDPKRRLEALRWRKWQIRARIQSSIDRNLAQAMNELERIGNLLNLPKSVKDEAALIYRKAVEKGLVRGRSIESVVAAAIYAACRRMKLARTLDEIAQYTKANRKEVARCYRLLLRELDVSVPVSDPKDYVTRIANLLGLSGAVMKTAAEIIDKAKGSGLTAGKDPAGLAAAAIYIASLLHDERRTQKEIAQVAGVTEVTVRNRYKELTQELKISIPTQ</sequence>
<proteinExistence type="inferred from homology"/>
<dbReference type="EMBL" id="U20899">
    <property type="protein sequence ID" value="AAA81380.1"/>
    <property type="status" value="ALT_INIT"/>
    <property type="molecule type" value="Genomic_DNA"/>
</dbReference>
<dbReference type="EMBL" id="CP077717">
    <property type="protein sequence ID" value="QXJ30100.1"/>
    <property type="molecule type" value="Genomic_DNA"/>
</dbReference>
<dbReference type="PIR" id="T46894">
    <property type="entry name" value="T46894"/>
</dbReference>
<dbReference type="SMR" id="P50387"/>
<dbReference type="KEGG" id="sshi:J5U23_02991"/>
<dbReference type="Proteomes" id="UP000694018">
    <property type="component" value="Chromosome"/>
</dbReference>
<dbReference type="GO" id="GO:0097550">
    <property type="term" value="C:transcription preinitiation complex"/>
    <property type="evidence" value="ECO:0007669"/>
    <property type="project" value="TreeGrafter"/>
</dbReference>
<dbReference type="GO" id="GO:0003700">
    <property type="term" value="F:DNA-binding transcription factor activity"/>
    <property type="evidence" value="ECO:0007669"/>
    <property type="project" value="UniProtKB-UniRule"/>
</dbReference>
<dbReference type="GO" id="GO:0017025">
    <property type="term" value="F:TBP-class protein binding"/>
    <property type="evidence" value="ECO:0007669"/>
    <property type="project" value="InterPro"/>
</dbReference>
<dbReference type="GO" id="GO:0070897">
    <property type="term" value="P:transcription preinitiation complex assembly"/>
    <property type="evidence" value="ECO:0007669"/>
    <property type="project" value="InterPro"/>
</dbReference>
<dbReference type="CDD" id="cd20549">
    <property type="entry name" value="CYCLIN_TFIIB_archaea_like_rpt1"/>
    <property type="match status" value="1"/>
</dbReference>
<dbReference type="CDD" id="cd20550">
    <property type="entry name" value="CYCLIN_TFIIB_archaea_like_rpt2"/>
    <property type="match status" value="1"/>
</dbReference>
<dbReference type="FunFam" id="1.10.472.10:FF:000023">
    <property type="entry name" value="Transcription initiation factor IIB"/>
    <property type="match status" value="1"/>
</dbReference>
<dbReference type="FunFam" id="1.10.472.170:FF:000001">
    <property type="entry name" value="Transcription initiation factor IIB"/>
    <property type="match status" value="1"/>
</dbReference>
<dbReference type="Gene3D" id="1.10.472.170">
    <property type="match status" value="1"/>
</dbReference>
<dbReference type="Gene3D" id="1.10.472.10">
    <property type="entry name" value="Cyclin-like"/>
    <property type="match status" value="1"/>
</dbReference>
<dbReference type="HAMAP" id="MF_00383">
    <property type="entry name" value="TF2B_arch"/>
    <property type="match status" value="1"/>
</dbReference>
<dbReference type="InterPro" id="IPR013763">
    <property type="entry name" value="Cyclin-like_dom"/>
</dbReference>
<dbReference type="InterPro" id="IPR036915">
    <property type="entry name" value="Cyclin-like_sf"/>
</dbReference>
<dbReference type="InterPro" id="IPR000812">
    <property type="entry name" value="TFIIB"/>
</dbReference>
<dbReference type="InterPro" id="IPR023484">
    <property type="entry name" value="TFIIB_arc"/>
</dbReference>
<dbReference type="InterPro" id="IPR023486">
    <property type="entry name" value="TFIIB_CS"/>
</dbReference>
<dbReference type="InterPro" id="IPR013150">
    <property type="entry name" value="TFIIB_cyclin"/>
</dbReference>
<dbReference type="InterPro" id="IPR013137">
    <property type="entry name" value="Znf_TFIIB"/>
</dbReference>
<dbReference type="NCBIfam" id="NF001658">
    <property type="entry name" value="PRK00423.1"/>
    <property type="match status" value="1"/>
</dbReference>
<dbReference type="PANTHER" id="PTHR11618:SF13">
    <property type="entry name" value="TRANSCRIPTION INITIATION FACTOR IIB"/>
    <property type="match status" value="1"/>
</dbReference>
<dbReference type="PANTHER" id="PTHR11618">
    <property type="entry name" value="TRANSCRIPTION INITIATION FACTOR IIB-RELATED"/>
    <property type="match status" value="1"/>
</dbReference>
<dbReference type="Pfam" id="PF00382">
    <property type="entry name" value="TFIIB"/>
    <property type="match status" value="2"/>
</dbReference>
<dbReference type="Pfam" id="PF08271">
    <property type="entry name" value="Zn_Ribbon_TF"/>
    <property type="match status" value="1"/>
</dbReference>
<dbReference type="PRINTS" id="PR00685">
    <property type="entry name" value="TIFACTORIIB"/>
</dbReference>
<dbReference type="SMART" id="SM00385">
    <property type="entry name" value="CYCLIN"/>
    <property type="match status" value="2"/>
</dbReference>
<dbReference type="SUPFAM" id="SSF47954">
    <property type="entry name" value="Cyclin-like"/>
    <property type="match status" value="2"/>
</dbReference>
<dbReference type="SUPFAM" id="SSF57783">
    <property type="entry name" value="Zinc beta-ribbon"/>
    <property type="match status" value="1"/>
</dbReference>
<dbReference type="PROSITE" id="PS00782">
    <property type="entry name" value="TFIIB"/>
    <property type="match status" value="2"/>
</dbReference>